<proteinExistence type="evidence at protein level"/>
<organism>
    <name type="scientific">Rattus norvegicus</name>
    <name type="common">Rat</name>
    <dbReference type="NCBI Taxonomy" id="10116"/>
    <lineage>
        <taxon>Eukaryota</taxon>
        <taxon>Metazoa</taxon>
        <taxon>Chordata</taxon>
        <taxon>Craniata</taxon>
        <taxon>Vertebrata</taxon>
        <taxon>Euteleostomi</taxon>
        <taxon>Mammalia</taxon>
        <taxon>Eutheria</taxon>
        <taxon>Euarchontoglires</taxon>
        <taxon>Glires</taxon>
        <taxon>Rodentia</taxon>
        <taxon>Myomorpha</taxon>
        <taxon>Muroidea</taxon>
        <taxon>Muridae</taxon>
        <taxon>Murinae</taxon>
        <taxon>Rattus</taxon>
    </lineage>
</organism>
<keyword id="KW-1003">Cell membrane</keyword>
<keyword id="KW-0325">Glycoprotein</keyword>
<keyword id="KW-0407">Ion channel</keyword>
<keyword id="KW-0406">Ion transport</keyword>
<keyword id="KW-0472">Membrane</keyword>
<keyword id="KW-0479">Metal-binding</keyword>
<keyword id="KW-0630">Potassium</keyword>
<keyword id="KW-0631">Potassium channel</keyword>
<keyword id="KW-0633">Potassium transport</keyword>
<keyword id="KW-1185">Reference proteome</keyword>
<keyword id="KW-0812">Transmembrane</keyword>
<keyword id="KW-1133">Transmembrane helix</keyword>
<keyword id="KW-0813">Transport</keyword>
<keyword id="KW-0851">Voltage-gated channel</keyword>
<accession>Q9ERS0</accession>
<dbReference type="EMBL" id="AF287301">
    <property type="protein sequence ID" value="AAG32312.1"/>
    <property type="molecule type" value="mRNA"/>
</dbReference>
<dbReference type="RefSeq" id="NP_071629.1">
    <property type="nucleotide sequence ID" value="NM_022293.1"/>
</dbReference>
<dbReference type="SMR" id="Q9ERS0"/>
<dbReference type="FunCoup" id="Q9ERS0">
    <property type="interactions" value="23"/>
</dbReference>
<dbReference type="STRING" id="10116.ENSRNOP00000067310"/>
<dbReference type="ChEMBL" id="CHEMBL5169194"/>
<dbReference type="GlyCosmos" id="Q9ERS0">
    <property type="glycosylation" value="2 sites, No reported glycans"/>
</dbReference>
<dbReference type="GlyGen" id="Q9ERS0">
    <property type="glycosylation" value="2 sites"/>
</dbReference>
<dbReference type="PhosphoSitePlus" id="Q9ERS0"/>
<dbReference type="PaxDb" id="10116-ENSRNOP00000067310"/>
<dbReference type="GeneID" id="64120"/>
<dbReference type="KEGG" id="rno:64120"/>
<dbReference type="UCSC" id="RGD:68941">
    <property type="organism name" value="rat"/>
</dbReference>
<dbReference type="AGR" id="RGD:68941"/>
<dbReference type="CTD" id="56659"/>
<dbReference type="RGD" id="68941">
    <property type="gene designation" value="Kcnk13"/>
</dbReference>
<dbReference type="eggNOG" id="KOG4404">
    <property type="taxonomic scope" value="Eukaryota"/>
</dbReference>
<dbReference type="InParanoid" id="Q9ERS0"/>
<dbReference type="PhylomeDB" id="Q9ERS0"/>
<dbReference type="Reactome" id="R-RNO-1299287">
    <property type="pathway name" value="Tandem pore domain halothane-inhibited K+ channel (THIK)"/>
</dbReference>
<dbReference type="Reactome" id="R-RNO-5576886">
    <property type="pathway name" value="Phase 4 - resting membrane potential"/>
</dbReference>
<dbReference type="PRO" id="PR:Q9ERS0"/>
<dbReference type="Proteomes" id="UP000002494">
    <property type="component" value="Unplaced"/>
</dbReference>
<dbReference type="GO" id="GO:0034702">
    <property type="term" value="C:monoatomic ion channel complex"/>
    <property type="evidence" value="ECO:0007669"/>
    <property type="project" value="UniProtKB-KW"/>
</dbReference>
<dbReference type="GO" id="GO:0005886">
    <property type="term" value="C:plasma membrane"/>
    <property type="evidence" value="ECO:0000314"/>
    <property type="project" value="UniProtKB"/>
</dbReference>
<dbReference type="GO" id="GO:0042802">
    <property type="term" value="F:identical protein binding"/>
    <property type="evidence" value="ECO:0000250"/>
    <property type="project" value="UniProtKB"/>
</dbReference>
<dbReference type="GO" id="GO:0046872">
    <property type="term" value="F:metal ion binding"/>
    <property type="evidence" value="ECO:0007669"/>
    <property type="project" value="UniProtKB-KW"/>
</dbReference>
<dbReference type="GO" id="GO:0015271">
    <property type="term" value="F:outward rectifier potassium channel activity"/>
    <property type="evidence" value="ECO:0000318"/>
    <property type="project" value="GO_Central"/>
</dbReference>
<dbReference type="GO" id="GO:0005267">
    <property type="term" value="F:potassium channel activity"/>
    <property type="evidence" value="ECO:0000314"/>
    <property type="project" value="UniProtKB"/>
</dbReference>
<dbReference type="GO" id="GO:0022841">
    <property type="term" value="F:potassium ion leak channel activity"/>
    <property type="evidence" value="ECO:0000318"/>
    <property type="project" value="GO_Central"/>
</dbReference>
<dbReference type="GO" id="GO:0046982">
    <property type="term" value="F:protein heterodimerization activity"/>
    <property type="evidence" value="ECO:0000250"/>
    <property type="project" value="UniProtKB"/>
</dbReference>
<dbReference type="GO" id="GO:0071805">
    <property type="term" value="P:potassium ion transmembrane transport"/>
    <property type="evidence" value="ECO:0000318"/>
    <property type="project" value="GO_Central"/>
</dbReference>
<dbReference type="GO" id="GO:1905810">
    <property type="term" value="P:regulation of excitatory synapse pruning"/>
    <property type="evidence" value="ECO:0000250"/>
    <property type="project" value="UniProtKB"/>
</dbReference>
<dbReference type="GO" id="GO:1900225">
    <property type="term" value="P:regulation of NLRP3 inflammasome complex assembly"/>
    <property type="evidence" value="ECO:0000250"/>
    <property type="project" value="UniProtKB"/>
</dbReference>
<dbReference type="GO" id="GO:0060075">
    <property type="term" value="P:regulation of resting membrane potential"/>
    <property type="evidence" value="ECO:0000250"/>
    <property type="project" value="UniProtKB"/>
</dbReference>
<dbReference type="FunFam" id="1.10.287.70:FF:000070">
    <property type="entry name" value="Potassium channel, subfamily K, member 12 like"/>
    <property type="match status" value="1"/>
</dbReference>
<dbReference type="Gene3D" id="1.10.287.70">
    <property type="match status" value="1"/>
</dbReference>
<dbReference type="InterPro" id="IPR003280">
    <property type="entry name" value="2pore_dom_K_chnl"/>
</dbReference>
<dbReference type="InterPro" id="IPR005410">
    <property type="entry name" value="2pore_dom_K_chnl_THIK"/>
</dbReference>
<dbReference type="InterPro" id="IPR013099">
    <property type="entry name" value="K_chnl_dom"/>
</dbReference>
<dbReference type="PANTHER" id="PTHR11003:SF57">
    <property type="entry name" value="POTASSIUM CHANNEL SUBFAMILY K MEMBER 13"/>
    <property type="match status" value="1"/>
</dbReference>
<dbReference type="PANTHER" id="PTHR11003">
    <property type="entry name" value="POTASSIUM CHANNEL, SUBFAMILY K"/>
    <property type="match status" value="1"/>
</dbReference>
<dbReference type="Pfam" id="PF07885">
    <property type="entry name" value="Ion_trans_2"/>
    <property type="match status" value="2"/>
</dbReference>
<dbReference type="PRINTS" id="PR01333">
    <property type="entry name" value="2POREKCHANEL"/>
</dbReference>
<dbReference type="PRINTS" id="PR01588">
    <property type="entry name" value="THIKCHANNEL"/>
</dbReference>
<dbReference type="SUPFAM" id="SSF81324">
    <property type="entry name" value="Voltage-gated potassium channels"/>
    <property type="match status" value="2"/>
</dbReference>
<name>KCNKD_RAT</name>
<sequence>MAGRGCSCSPGHLNEDNARFLLLAGLILLYLLGGAAVFSALELAQELQAKQRWEERLANFSRGHNLSREELRGFLRHYEEATKAGIRMDSVRPRWDFTGAFYFVGTVVTTIGFGMTTPATTGGKVFLIFYGLIGCASTILFFNLFLERLITVIAYVMRTCHHQQLRRRGTVARDNRKAPRKGEADSLAGWKPSVYYVMLILCLASVAISCGASALYTTMEGWSYFDSVYFCFVASSTIGFGDLVSSQNAQYENEGLYRFVNFFFILMGVCCIYSMFNVISILIKQTVNWILRKLDSGCFPQCQRGLLRSRRNVVMPGNIRNRCNISIETDGVMESDTDGRRLSGEMISMKDTNKVSLAILQKQLSEMANGGPHQTSTSSRDDEFSGGVGAFAVMNNRLAETSGDR</sequence>
<comment type="function">
    <text evidence="2 3 5">K(+) channel that conducts outward rectifying tonic currents potentiated by purinergic signals (By similarity) (PubMed:11060316). Homo- and heterodimerizes to form functional channels with distinct regulatory and gating properties (By similarity). Contributes most of K(+) currents at the plasma membrane of resting microglia. Maintains a depolarized membrane potential required for proper ramified microglia morphology and phagocytosis, selectively mediating microglial pruning of presynaptic compartments at hippocampal excitatory synapses (By similarity). Upon local release of ATP caused by neuronal injury or infection, it is potentiated by P2RY12 and P2RX7 receptor signaling and contributes to ATP-triggered K(+) efflux underlying microglial NLRP3 inflammasome assembly and IL1B release (By similarity).</text>
</comment>
<comment type="catalytic activity">
    <reaction evidence="5">
        <text>K(+)(in) = K(+)(out)</text>
        <dbReference type="Rhea" id="RHEA:29463"/>
        <dbReference type="ChEBI" id="CHEBI:29103"/>
    </reaction>
</comment>
<comment type="activity regulation">
    <text evidence="5">The channel currents are activated by arachidonic acid, inhibited by volatile anesthetic halothane, partially inhibited by Ba(2+) ions and only weakly inhibited by extracellular acidification to pH 6.</text>
</comment>
<comment type="subunit">
    <text evidence="3">Homodimer. Heterodimer with KCNK12.</text>
</comment>
<comment type="subcellular location">
    <subcellularLocation>
        <location evidence="5">Cell membrane</location>
        <topology evidence="4">Multi-pass membrane protein</topology>
    </subcellularLocation>
</comment>
<comment type="tissue specificity">
    <text evidence="5">Ubiquitous. In brain expression is rather low and restricted to the olfactory bulb and tubercle, to the ventromedial hypothalamic nucleus, lateral septal nucleus dorsal, lateral mammillary nucleus, lateral parabrachial nuclei, reticular nucleus and reunions nuclei.</text>
</comment>
<comment type="domain">
    <text evidence="1">Each subunit contributes two pore-forming domains 1 and 2 which assemble to form a single pore with M2 and M4 transmembrane helices lining the central cavity and M1 and M3 facing the lipid bilayer. The transmembrane helices are bridged by the selectivity filters 1 and 2 that coordinate the permeant ions. Up to four ions can simultaneously occupy the selectivity filter and at least two elementary charges must translocate across the filter to convert it into the open conformation.</text>
</comment>
<comment type="similarity">
    <text evidence="7">Belongs to the two pore domain potassium channel (TC 1.A.1.8) family.</text>
</comment>
<reference key="1">
    <citation type="journal article" date="2001" name="J. Biol. Chem.">
        <title>THIK-1 and THIK-2, a novel subfamily of tandem pore domain K+ channels.</title>
        <authorList>
            <person name="Rajan S."/>
            <person name="Wischmeyer E."/>
            <person name="Karschin C."/>
            <person name="Preisig-Mueller R."/>
            <person name="Grzeschik K.-H."/>
            <person name="Daut J."/>
            <person name="Karschin A."/>
            <person name="Derst C."/>
        </authorList>
    </citation>
    <scope>NUCLEOTIDE SEQUENCE [MRNA]</scope>
    <scope>CHARACTERIZATION</scope>
    <scope>FUNCTION</scope>
    <scope>TRANSPORTER ACTIVITY</scope>
    <scope>ACTIVITY REGULATION</scope>
    <scope>SUBCELLULAR LOCATION</scope>
    <source>
        <strain>Wistar</strain>
        <tissue>Brain</tissue>
        <tissue>Heart</tissue>
    </source>
</reference>
<gene>
    <name evidence="8" type="primary">Kcnk13</name>
</gene>
<evidence type="ECO:0000250" key="1">
    <source>
        <dbReference type="UniProtKB" id="P57789"/>
    </source>
</evidence>
<evidence type="ECO:0000250" key="2">
    <source>
        <dbReference type="UniProtKB" id="Q8R1P5"/>
    </source>
</evidence>
<evidence type="ECO:0000250" key="3">
    <source>
        <dbReference type="UniProtKB" id="Q9HB14"/>
    </source>
</evidence>
<evidence type="ECO:0000255" key="4"/>
<evidence type="ECO:0000269" key="5">
    <source>
    </source>
</evidence>
<evidence type="ECO:0000303" key="6">
    <source>
    </source>
</evidence>
<evidence type="ECO:0000305" key="7"/>
<evidence type="ECO:0000312" key="8">
    <source>
        <dbReference type="RGD" id="68941"/>
    </source>
</evidence>
<protein>
    <recommendedName>
        <fullName>Potassium channel subfamily K member 13</fullName>
    </recommendedName>
    <alternativeName>
        <fullName evidence="6">Tandem pore domain halothane-inhibited potassium channel 1</fullName>
        <shortName evidence="6">THIK-1</shortName>
    </alternativeName>
</protein>
<feature type="chain" id="PRO_0000101764" description="Potassium channel subfamily K member 13">
    <location>
        <begin position="1"/>
        <end position="405"/>
    </location>
</feature>
<feature type="topological domain" description="Cytoplasmic" evidence="4">
    <location>
        <begin position="1"/>
        <end position="19"/>
    </location>
</feature>
<feature type="transmembrane region" description="Helical" evidence="4">
    <location>
        <begin position="20"/>
        <end position="40"/>
    </location>
</feature>
<feature type="intramembrane region" description="Pore-forming; Name=Pore-forming 1" evidence="4">
    <location>
        <begin position="95"/>
        <end position="115"/>
    </location>
</feature>
<feature type="transmembrane region" description="Helical" evidence="4">
    <location>
        <begin position="125"/>
        <end position="145"/>
    </location>
</feature>
<feature type="topological domain" description="Cytoplasmic" evidence="4">
    <location>
        <begin position="146"/>
        <end position="193"/>
    </location>
</feature>
<feature type="transmembrane region" description="Helical" evidence="4">
    <location>
        <begin position="194"/>
        <end position="214"/>
    </location>
</feature>
<feature type="intramembrane region" description="Pore-forming; Name=Pore-forming 2" evidence="4">
    <location>
        <begin position="224"/>
        <end position="244"/>
    </location>
</feature>
<feature type="transmembrane region" description="Helical" evidence="4">
    <location>
        <begin position="263"/>
        <end position="283"/>
    </location>
</feature>
<feature type="topological domain" description="Cytoplasmic" evidence="4">
    <location>
        <begin position="284"/>
        <end position="405"/>
    </location>
</feature>
<feature type="region of interest" description="Selectivity filter 1" evidence="1">
    <location>
        <begin position="110"/>
        <end position="115"/>
    </location>
</feature>
<feature type="region of interest" description="Selectivity filter 2" evidence="1">
    <location>
        <begin position="237"/>
        <end position="242"/>
    </location>
</feature>
<feature type="binding site" evidence="1">
    <location>
        <position position="110"/>
    </location>
    <ligand>
        <name>K(+)</name>
        <dbReference type="ChEBI" id="CHEBI:29103"/>
        <label>1</label>
    </ligand>
</feature>
<feature type="binding site" evidence="1">
    <location>
        <position position="110"/>
    </location>
    <ligand>
        <name>K(+)</name>
        <dbReference type="ChEBI" id="CHEBI:29103"/>
        <label>4</label>
    </ligand>
</feature>
<feature type="binding site" evidence="1">
    <location>
        <position position="111"/>
    </location>
    <ligand>
        <name>K(+)</name>
        <dbReference type="ChEBI" id="CHEBI:29103"/>
        <label>1</label>
    </ligand>
</feature>
<feature type="binding site" evidence="1">
    <location>
        <position position="111"/>
    </location>
    <ligand>
        <name>K(+)</name>
        <dbReference type="ChEBI" id="CHEBI:29103"/>
        <label>2</label>
    </ligand>
</feature>
<feature type="binding site" evidence="1">
    <location>
        <position position="112"/>
    </location>
    <ligand>
        <name>K(+)</name>
        <dbReference type="ChEBI" id="CHEBI:29103"/>
        <label>2</label>
    </ligand>
</feature>
<feature type="binding site" evidence="1">
    <location>
        <position position="112"/>
    </location>
    <ligand>
        <name>K(+)</name>
        <dbReference type="ChEBI" id="CHEBI:29103"/>
        <label>3</label>
    </ligand>
</feature>
<feature type="binding site" evidence="1">
    <location>
        <position position="237"/>
    </location>
    <ligand>
        <name>K(+)</name>
        <dbReference type="ChEBI" id="CHEBI:29103"/>
        <label>1</label>
    </ligand>
</feature>
<feature type="binding site" evidence="1">
    <location>
        <position position="237"/>
    </location>
    <ligand>
        <name>K(+)</name>
        <dbReference type="ChEBI" id="CHEBI:29103"/>
        <label>4</label>
    </ligand>
</feature>
<feature type="binding site" evidence="1">
    <location>
        <position position="238"/>
    </location>
    <ligand>
        <name>K(+)</name>
        <dbReference type="ChEBI" id="CHEBI:29103"/>
        <label>1</label>
    </ligand>
</feature>
<feature type="binding site" evidence="1">
    <location>
        <position position="238"/>
    </location>
    <ligand>
        <name>K(+)</name>
        <dbReference type="ChEBI" id="CHEBI:29103"/>
        <label>2</label>
    </ligand>
</feature>
<feature type="binding site" evidence="1">
    <location>
        <position position="239"/>
    </location>
    <ligand>
        <name>K(+)</name>
        <dbReference type="ChEBI" id="CHEBI:29103"/>
        <label>2</label>
    </ligand>
</feature>
<feature type="binding site" evidence="1">
    <location>
        <position position="239"/>
    </location>
    <ligand>
        <name>K(+)</name>
        <dbReference type="ChEBI" id="CHEBI:29103"/>
        <label>3</label>
    </ligand>
</feature>
<feature type="binding site" evidence="1">
    <location>
        <position position="240"/>
    </location>
    <ligand>
        <name>K(+)</name>
        <dbReference type="ChEBI" id="CHEBI:29103"/>
        <label>3</label>
    </ligand>
</feature>
<feature type="glycosylation site" description="N-linked (GlcNAc...) asparagine" evidence="4">
    <location>
        <position position="59"/>
    </location>
</feature>
<feature type="glycosylation site" description="N-linked (GlcNAc...) asparagine" evidence="4">
    <location>
        <position position="65"/>
    </location>
</feature>